<comment type="function">
    <text>Component of the LIV-II transport system for branched-chain amino acids. BraB is specific for isoleucine, leucine and valine. The LIV-II transport system is coupled to sodium and lithium ions.</text>
</comment>
<comment type="subcellular location">
    <subcellularLocation>
        <location>Cell inner membrane</location>
        <topology>Multi-pass membrane protein</topology>
    </subcellularLocation>
</comment>
<comment type="similarity">
    <text evidence="2">Belongs to the branched chain amino acid transporter family.</text>
</comment>
<gene>
    <name type="primary">braB</name>
    <name type="ordered locus">PA1590</name>
</gene>
<organism>
    <name type="scientific">Pseudomonas aeruginosa (strain ATCC 15692 / DSM 22644 / CIP 104116 / JCM 14847 / LMG 12228 / 1C / PRS 101 / PAO1)</name>
    <dbReference type="NCBI Taxonomy" id="208964"/>
    <lineage>
        <taxon>Bacteria</taxon>
        <taxon>Pseudomonadati</taxon>
        <taxon>Pseudomonadota</taxon>
        <taxon>Gammaproteobacteria</taxon>
        <taxon>Pseudomonadales</taxon>
        <taxon>Pseudomonadaceae</taxon>
        <taxon>Pseudomonas</taxon>
    </lineage>
</organism>
<proteinExistence type="inferred from homology"/>
<keyword id="KW-0029">Amino-acid transport</keyword>
<keyword id="KW-0997">Cell inner membrane</keyword>
<keyword id="KW-1003">Cell membrane</keyword>
<keyword id="KW-0472">Membrane</keyword>
<keyword id="KW-1185">Reference proteome</keyword>
<keyword id="KW-0812">Transmembrane</keyword>
<keyword id="KW-1133">Transmembrane helix</keyword>
<keyword id="KW-0813">Transport</keyword>
<name>BRAB_PSEAE</name>
<evidence type="ECO:0000255" key="1"/>
<evidence type="ECO:0000305" key="2"/>
<protein>
    <recommendedName>
        <fullName>Branched-chain amino acid transport system 2 carrier protein</fullName>
    </recommendedName>
    <alternativeName>
        <fullName>LIV-II</fullName>
    </alternativeName>
</protein>
<reference key="1">
    <citation type="journal article" date="1990" name="Mol. Gen. Genet.">
        <title>Cloning and nucleotide sequence of the gene braB coding for the sodium-coupled branched-chain amino acid carrier in Pseudomonas aeruginosa PAO.</title>
        <authorList>
            <person name="Hoshino T."/>
            <person name="Kose K."/>
            <person name="Uratani Y."/>
        </authorList>
    </citation>
    <scope>NUCLEOTIDE SEQUENCE [GENOMIC DNA]</scope>
    <source>
        <strain>PAO</strain>
    </source>
</reference>
<reference key="2">
    <citation type="journal article" date="2000" name="Nature">
        <title>Complete genome sequence of Pseudomonas aeruginosa PAO1, an opportunistic pathogen.</title>
        <authorList>
            <person name="Stover C.K."/>
            <person name="Pham X.-Q.T."/>
            <person name="Erwin A.L."/>
            <person name="Mizoguchi S.D."/>
            <person name="Warrener P."/>
            <person name="Hickey M.J."/>
            <person name="Brinkman F.S.L."/>
            <person name="Hufnagle W.O."/>
            <person name="Kowalik D.J."/>
            <person name="Lagrou M."/>
            <person name="Garber R.L."/>
            <person name="Goltry L."/>
            <person name="Tolentino E."/>
            <person name="Westbrock-Wadman S."/>
            <person name="Yuan Y."/>
            <person name="Brody L.L."/>
            <person name="Coulter S.N."/>
            <person name="Folger K.R."/>
            <person name="Kas A."/>
            <person name="Larbig K."/>
            <person name="Lim R.M."/>
            <person name="Smith K.A."/>
            <person name="Spencer D.H."/>
            <person name="Wong G.K.-S."/>
            <person name="Wu Z."/>
            <person name="Paulsen I.T."/>
            <person name="Reizer J."/>
            <person name="Saier M.H. Jr."/>
            <person name="Hancock R.E.W."/>
            <person name="Lory S."/>
            <person name="Olson M.V."/>
        </authorList>
    </citation>
    <scope>NUCLEOTIDE SEQUENCE [LARGE SCALE GENOMIC DNA]</scope>
    <source>
        <strain>ATCC 15692 / DSM 22644 / CIP 104116 / JCM 14847 / LMG 12228 / 1C / PRS 101 / PAO1</strain>
    </source>
</reference>
<dbReference type="EMBL" id="X51634">
    <property type="protein sequence ID" value="CAA35961.1"/>
    <property type="molecule type" value="Genomic_DNA"/>
</dbReference>
<dbReference type="EMBL" id="AE004091">
    <property type="protein sequence ID" value="AAG04979.1"/>
    <property type="molecule type" value="Genomic_DNA"/>
</dbReference>
<dbReference type="PIR" id="S11497">
    <property type="entry name" value="S11497"/>
</dbReference>
<dbReference type="RefSeq" id="NP_250281.1">
    <property type="nucleotide sequence ID" value="NC_002516.2"/>
</dbReference>
<dbReference type="STRING" id="208964.PA1590"/>
<dbReference type="TCDB" id="2.A.26.1.1">
    <property type="family name" value="the branched chain amino acid:cation symporter (livcs) family"/>
</dbReference>
<dbReference type="PaxDb" id="208964-PA1590"/>
<dbReference type="GeneID" id="882083"/>
<dbReference type="KEGG" id="pae:PA1590"/>
<dbReference type="PATRIC" id="fig|208964.12.peg.1649"/>
<dbReference type="PseudoCAP" id="PA1590"/>
<dbReference type="HOGENOM" id="CLU_036807_0_0_6"/>
<dbReference type="InParanoid" id="P19072"/>
<dbReference type="OrthoDB" id="9783920at2"/>
<dbReference type="PhylomeDB" id="P19072"/>
<dbReference type="BioCyc" id="PAER208964:G1FZ6-1620-MONOMER"/>
<dbReference type="Proteomes" id="UP000002438">
    <property type="component" value="Chromosome"/>
</dbReference>
<dbReference type="GO" id="GO:0005886">
    <property type="term" value="C:plasma membrane"/>
    <property type="evidence" value="ECO:0000318"/>
    <property type="project" value="GO_Central"/>
</dbReference>
<dbReference type="GO" id="GO:0015188">
    <property type="term" value="F:L-isoleucine transmembrane transporter activity"/>
    <property type="evidence" value="ECO:0000318"/>
    <property type="project" value="GO_Central"/>
</dbReference>
<dbReference type="GO" id="GO:0015190">
    <property type="term" value="F:L-leucine transmembrane transporter activity"/>
    <property type="evidence" value="ECO:0000318"/>
    <property type="project" value="GO_Central"/>
</dbReference>
<dbReference type="GO" id="GO:0005304">
    <property type="term" value="F:L-valine transmembrane transporter activity"/>
    <property type="evidence" value="ECO:0000318"/>
    <property type="project" value="GO_Central"/>
</dbReference>
<dbReference type="GO" id="GO:0015803">
    <property type="term" value="P:branched-chain amino acid transport"/>
    <property type="evidence" value="ECO:0000314"/>
    <property type="project" value="PseudoCAP"/>
</dbReference>
<dbReference type="GO" id="GO:0015818">
    <property type="term" value="P:isoleucine transport"/>
    <property type="evidence" value="ECO:0000318"/>
    <property type="project" value="GO_Central"/>
</dbReference>
<dbReference type="GO" id="GO:0015820">
    <property type="term" value="P:L-leucine transport"/>
    <property type="evidence" value="ECO:0000318"/>
    <property type="project" value="GO_Central"/>
</dbReference>
<dbReference type="GO" id="GO:0015829">
    <property type="term" value="P:valine transport"/>
    <property type="evidence" value="ECO:0000318"/>
    <property type="project" value="GO_Central"/>
</dbReference>
<dbReference type="InterPro" id="IPR004685">
    <property type="entry name" value="Brnchd-chn_aa_trnsp_Livcs"/>
</dbReference>
<dbReference type="NCBIfam" id="TIGR00796">
    <property type="entry name" value="livcs"/>
    <property type="match status" value="1"/>
</dbReference>
<dbReference type="PANTHER" id="PTHR30588:SF0">
    <property type="entry name" value="BRANCHED-CHAIN AMINO ACID PERMEASE BRNQ"/>
    <property type="match status" value="1"/>
</dbReference>
<dbReference type="PANTHER" id="PTHR30588">
    <property type="entry name" value="BRANCHED-CHAIN AMINO ACID TRANSPORT SYSTEM 2 CARRIER PROTEIN"/>
    <property type="match status" value="1"/>
</dbReference>
<dbReference type="Pfam" id="PF05525">
    <property type="entry name" value="Branch_AA_trans"/>
    <property type="match status" value="1"/>
</dbReference>
<sequence length="437" mass="45283">MTHLKGFDLLALGFMTFALFLGAGNIIFPPSAGMAAGEHVWSAAFGFLLTGVGLPLLTVVALARVGGGIGRLTQPIGRRAGVAFAIAVYLAIGPLFATPRTAVVSFEMGVAPFTGDGGVPLLIYTVAYFSVVLFLVLNPGRLVDRVGKVITPVLLSALLVLGGAAIFAPAGEIGSSSGEYQSAPLVQGFLQGYLTMDTLGALVFGIVIATAIRDRGISDSRLVTRYSMIAGVIAATGLSLVYLALFYLGATSQGIAGDAQNGVQILTAYVQQTFGVSGSLLLAVVITLACLTTAVGLITACGEFFSDLLPVSYKTVVIVFSLFSLLVANQGLTQLISLSVPVLVGLYPLAIVLIALSLFDRLWVSAPRVFVPVMIVALLFGIVDGLGAAKLNGWVPDVFAKLPLADQSLGWLLPVSIALVLAVVCDRLLGKPREAVA</sequence>
<feature type="chain" id="PRO_0000099764" description="Branched-chain amino acid transport system 2 carrier protein">
    <location>
        <begin position="1"/>
        <end position="437"/>
    </location>
</feature>
<feature type="transmembrane region" description="Helical" evidence="1">
    <location>
        <begin position="9"/>
        <end position="29"/>
    </location>
</feature>
<feature type="transmembrane region" description="Helical" evidence="1">
    <location>
        <begin position="43"/>
        <end position="63"/>
    </location>
</feature>
<feature type="transmembrane region" description="Helical" evidence="1">
    <location>
        <begin position="80"/>
        <end position="100"/>
    </location>
</feature>
<feature type="transmembrane region" description="Helical" evidence="1">
    <location>
        <begin position="117"/>
        <end position="137"/>
    </location>
</feature>
<feature type="transmembrane region" description="Helical" evidence="1">
    <location>
        <begin position="149"/>
        <end position="169"/>
    </location>
</feature>
<feature type="transmembrane region" description="Helical" evidence="1">
    <location>
        <begin position="192"/>
        <end position="212"/>
    </location>
</feature>
<feature type="transmembrane region" description="Helical" evidence="1">
    <location>
        <begin position="228"/>
        <end position="248"/>
    </location>
</feature>
<feature type="transmembrane region" description="Helical" evidence="1">
    <location>
        <begin position="280"/>
        <end position="300"/>
    </location>
</feature>
<feature type="transmembrane region" description="Helical" evidence="1">
    <location>
        <begin position="308"/>
        <end position="328"/>
    </location>
</feature>
<feature type="transmembrane region" description="Helical" evidence="1">
    <location>
        <begin position="335"/>
        <end position="355"/>
    </location>
</feature>
<feature type="transmembrane region" description="Helical" evidence="1">
    <location>
        <begin position="369"/>
        <end position="389"/>
    </location>
</feature>
<feature type="transmembrane region" description="Helical" evidence="1">
    <location>
        <begin position="404"/>
        <end position="424"/>
    </location>
</feature>
<accession>P19072</accession>